<dbReference type="EMBL" id="AP009376">
    <property type="protein sequence ID" value="BAF50661.1"/>
    <property type="molecule type" value="Genomic_DNA"/>
</dbReference>
<dbReference type="RefSeq" id="YP_001123837.1">
    <property type="nucleotide sequence ID" value="NC_009275.1"/>
</dbReference>
<dbReference type="SMR" id="A4QLV6"/>
<dbReference type="GeneID" id="4962104"/>
<dbReference type="GO" id="GO:0009507">
    <property type="term" value="C:chloroplast"/>
    <property type="evidence" value="ECO:0007669"/>
    <property type="project" value="UniProtKB-SubCell"/>
</dbReference>
<dbReference type="GO" id="GO:1990904">
    <property type="term" value="C:ribonucleoprotein complex"/>
    <property type="evidence" value="ECO:0007669"/>
    <property type="project" value="UniProtKB-KW"/>
</dbReference>
<dbReference type="GO" id="GO:0005840">
    <property type="term" value="C:ribosome"/>
    <property type="evidence" value="ECO:0007669"/>
    <property type="project" value="UniProtKB-KW"/>
</dbReference>
<dbReference type="GO" id="GO:0019843">
    <property type="term" value="F:rRNA binding"/>
    <property type="evidence" value="ECO:0007669"/>
    <property type="project" value="UniProtKB-UniRule"/>
</dbReference>
<dbReference type="GO" id="GO:0003735">
    <property type="term" value="F:structural constituent of ribosome"/>
    <property type="evidence" value="ECO:0007669"/>
    <property type="project" value="InterPro"/>
</dbReference>
<dbReference type="GO" id="GO:0000027">
    <property type="term" value="P:ribosomal large subunit assembly"/>
    <property type="evidence" value="ECO:0007669"/>
    <property type="project" value="UniProtKB-UniRule"/>
</dbReference>
<dbReference type="GO" id="GO:0006412">
    <property type="term" value="P:translation"/>
    <property type="evidence" value="ECO:0007669"/>
    <property type="project" value="InterPro"/>
</dbReference>
<dbReference type="CDD" id="cd07026">
    <property type="entry name" value="Ribosomal_L20"/>
    <property type="match status" value="1"/>
</dbReference>
<dbReference type="FunFam" id="1.10.1900.20:FF:000001">
    <property type="entry name" value="50S ribosomal protein L20"/>
    <property type="match status" value="1"/>
</dbReference>
<dbReference type="Gene3D" id="6.10.160.10">
    <property type="match status" value="1"/>
</dbReference>
<dbReference type="Gene3D" id="1.10.1900.20">
    <property type="entry name" value="Ribosomal protein L20"/>
    <property type="match status" value="1"/>
</dbReference>
<dbReference type="HAMAP" id="MF_00382">
    <property type="entry name" value="Ribosomal_bL20"/>
    <property type="match status" value="1"/>
</dbReference>
<dbReference type="InterPro" id="IPR005813">
    <property type="entry name" value="Ribosomal_bL20"/>
</dbReference>
<dbReference type="InterPro" id="IPR049946">
    <property type="entry name" value="RIBOSOMAL_L20_CS"/>
</dbReference>
<dbReference type="InterPro" id="IPR035566">
    <property type="entry name" value="Ribosomal_protein_bL20_C"/>
</dbReference>
<dbReference type="NCBIfam" id="TIGR01032">
    <property type="entry name" value="rplT_bact"/>
    <property type="match status" value="1"/>
</dbReference>
<dbReference type="PANTHER" id="PTHR10986">
    <property type="entry name" value="39S RIBOSOMAL PROTEIN L20"/>
    <property type="match status" value="1"/>
</dbReference>
<dbReference type="Pfam" id="PF00453">
    <property type="entry name" value="Ribosomal_L20"/>
    <property type="match status" value="1"/>
</dbReference>
<dbReference type="PRINTS" id="PR00062">
    <property type="entry name" value="RIBOSOMALL20"/>
</dbReference>
<dbReference type="SUPFAM" id="SSF74731">
    <property type="entry name" value="Ribosomal protein L20"/>
    <property type="match status" value="1"/>
</dbReference>
<dbReference type="PROSITE" id="PS00937">
    <property type="entry name" value="RIBOSOMAL_L20"/>
    <property type="match status" value="1"/>
</dbReference>
<geneLocation type="chloroplast"/>
<name>RK20_NASOF</name>
<feature type="chain" id="PRO_0000355516" description="Large ribosomal subunit protein bL20c">
    <location>
        <begin position="1"/>
        <end position="117"/>
    </location>
</feature>
<reference key="1">
    <citation type="submission" date="2007-03" db="EMBL/GenBank/DDBJ databases">
        <title>Sequencing analysis of Nasturtium officinale chloroplast DNA.</title>
        <authorList>
            <person name="Hosouchi T."/>
            <person name="Tsuruoka H."/>
            <person name="Kotani H."/>
        </authorList>
    </citation>
    <scope>NUCLEOTIDE SEQUENCE [LARGE SCALE GENOMIC DNA]</scope>
</reference>
<comment type="function">
    <text evidence="1">Binds directly to 23S ribosomal RNA and is necessary for the in vitro assembly process of the 50S ribosomal subunit. It is not involved in the protein synthesizing functions of that subunit.</text>
</comment>
<comment type="subcellular location">
    <subcellularLocation>
        <location>Plastid</location>
        <location>Chloroplast</location>
    </subcellularLocation>
</comment>
<comment type="similarity">
    <text evidence="1">Belongs to the bacterial ribosomal protein bL20 family.</text>
</comment>
<accession>A4QLV6</accession>
<gene>
    <name evidence="1" type="primary">rpl20</name>
</gene>
<proteinExistence type="inferred from homology"/>
<evidence type="ECO:0000255" key="1">
    <source>
        <dbReference type="HAMAP-Rule" id="MF_00382"/>
    </source>
</evidence>
<evidence type="ECO:0000305" key="2"/>
<organism>
    <name type="scientific">Nasturtium officinale</name>
    <name type="common">Watercress</name>
    <name type="synonym">Rorippa nasturtium-aquaticum</name>
    <dbReference type="NCBI Taxonomy" id="65948"/>
    <lineage>
        <taxon>Eukaryota</taxon>
        <taxon>Viridiplantae</taxon>
        <taxon>Streptophyta</taxon>
        <taxon>Embryophyta</taxon>
        <taxon>Tracheophyta</taxon>
        <taxon>Spermatophyta</taxon>
        <taxon>Magnoliopsida</taxon>
        <taxon>eudicotyledons</taxon>
        <taxon>Gunneridae</taxon>
        <taxon>Pentapetalae</taxon>
        <taxon>rosids</taxon>
        <taxon>malvids</taxon>
        <taxon>Brassicales</taxon>
        <taxon>Brassicaceae</taxon>
        <taxon>Cardamineae</taxon>
        <taxon>Nasturtium</taxon>
    </lineage>
</organism>
<sequence length="117" mass="14205">MTRIKRGYIARRRRTKLRLFASSFRGAHSRLTRTMTQQRIRALVSAHRDRGKRKRDFRRLWITRINAVIHEMGVFYSYNRFIHNLYKKQLLLNRKILAQIALLNRSCLYTISNEIKE</sequence>
<keyword id="KW-0150">Chloroplast</keyword>
<keyword id="KW-0934">Plastid</keyword>
<keyword id="KW-0687">Ribonucleoprotein</keyword>
<keyword id="KW-0689">Ribosomal protein</keyword>
<keyword id="KW-0694">RNA-binding</keyword>
<keyword id="KW-0699">rRNA-binding</keyword>
<protein>
    <recommendedName>
        <fullName evidence="1">Large ribosomal subunit protein bL20c</fullName>
    </recommendedName>
    <alternativeName>
        <fullName evidence="2">50S ribosomal protein L20, chloroplastic</fullName>
    </alternativeName>
</protein>